<organism>
    <name type="scientific">Delftia acidovorans (strain DSM 14801 / SPH-1)</name>
    <dbReference type="NCBI Taxonomy" id="398578"/>
    <lineage>
        <taxon>Bacteria</taxon>
        <taxon>Pseudomonadati</taxon>
        <taxon>Pseudomonadota</taxon>
        <taxon>Betaproteobacteria</taxon>
        <taxon>Burkholderiales</taxon>
        <taxon>Comamonadaceae</taxon>
        <taxon>Delftia</taxon>
    </lineage>
</organism>
<accession>A9BNI6</accession>
<proteinExistence type="inferred from homology"/>
<comment type="function">
    <text evidence="1">Involved in the de novo purine biosynthesis. Catalyzes the transfer of formate to 5-phospho-ribosyl-glycinamide (GAR), producing 5-phospho-ribosyl-N-formylglycinamide (FGAR). Formate is provided by PurU via hydrolysis of 10-formyl-tetrahydrofolate.</text>
</comment>
<comment type="catalytic activity">
    <reaction evidence="1">
        <text>N(1)-(5-phospho-beta-D-ribosyl)glycinamide + formate + ATP = N(2)-formyl-N(1)-(5-phospho-beta-D-ribosyl)glycinamide + ADP + phosphate + H(+)</text>
        <dbReference type="Rhea" id="RHEA:24829"/>
        <dbReference type="ChEBI" id="CHEBI:15378"/>
        <dbReference type="ChEBI" id="CHEBI:15740"/>
        <dbReference type="ChEBI" id="CHEBI:30616"/>
        <dbReference type="ChEBI" id="CHEBI:43474"/>
        <dbReference type="ChEBI" id="CHEBI:143788"/>
        <dbReference type="ChEBI" id="CHEBI:147286"/>
        <dbReference type="ChEBI" id="CHEBI:456216"/>
        <dbReference type="EC" id="6.3.1.21"/>
    </reaction>
    <physiologicalReaction direction="left-to-right" evidence="1">
        <dbReference type="Rhea" id="RHEA:24830"/>
    </physiologicalReaction>
</comment>
<comment type="pathway">
    <text evidence="1">Purine metabolism; IMP biosynthesis via de novo pathway; N(2)-formyl-N(1)-(5-phospho-D-ribosyl)glycinamide from N(1)-(5-phospho-D-ribosyl)glycinamide (formate route): step 1/1.</text>
</comment>
<comment type="subunit">
    <text evidence="1">Homodimer.</text>
</comment>
<comment type="similarity">
    <text evidence="1">Belongs to the PurK/PurT family.</text>
</comment>
<keyword id="KW-0067">ATP-binding</keyword>
<keyword id="KW-0436">Ligase</keyword>
<keyword id="KW-0460">Magnesium</keyword>
<keyword id="KW-0479">Metal-binding</keyword>
<keyword id="KW-0547">Nucleotide-binding</keyword>
<keyword id="KW-0658">Purine biosynthesis</keyword>
<keyword id="KW-1185">Reference proteome</keyword>
<reference key="1">
    <citation type="submission" date="2007-11" db="EMBL/GenBank/DDBJ databases">
        <title>Complete sequence of Delftia acidovorans DSM 14801 / SPH-1.</title>
        <authorList>
            <person name="Copeland A."/>
            <person name="Lucas S."/>
            <person name="Lapidus A."/>
            <person name="Barry K."/>
            <person name="Glavina del Rio T."/>
            <person name="Dalin E."/>
            <person name="Tice H."/>
            <person name="Pitluck S."/>
            <person name="Lowry S."/>
            <person name="Clum A."/>
            <person name="Schmutz J."/>
            <person name="Larimer F."/>
            <person name="Land M."/>
            <person name="Hauser L."/>
            <person name="Kyrpides N."/>
            <person name="Kim E."/>
            <person name="Schleheck D."/>
            <person name="Richardson P."/>
        </authorList>
    </citation>
    <scope>NUCLEOTIDE SEQUENCE [LARGE SCALE GENOMIC DNA]</scope>
    <source>
        <strain>DSM 14801 / SPH-1</strain>
    </source>
</reference>
<feature type="chain" id="PRO_1000186878" description="Formate-dependent phosphoribosylglycinamide formyltransferase">
    <location>
        <begin position="1"/>
        <end position="405"/>
    </location>
</feature>
<feature type="domain" description="ATP-grasp" evidence="1">
    <location>
        <begin position="120"/>
        <end position="320"/>
    </location>
</feature>
<feature type="binding site" evidence="1">
    <location>
        <begin position="22"/>
        <end position="23"/>
    </location>
    <ligand>
        <name>N(1)-(5-phospho-beta-D-ribosyl)glycinamide</name>
        <dbReference type="ChEBI" id="CHEBI:143788"/>
    </ligand>
</feature>
<feature type="binding site" evidence="1">
    <location>
        <position position="82"/>
    </location>
    <ligand>
        <name>N(1)-(5-phospho-beta-D-ribosyl)glycinamide</name>
        <dbReference type="ChEBI" id="CHEBI:143788"/>
    </ligand>
</feature>
<feature type="binding site" evidence="1">
    <location>
        <position position="115"/>
    </location>
    <ligand>
        <name>ATP</name>
        <dbReference type="ChEBI" id="CHEBI:30616"/>
    </ligand>
</feature>
<feature type="binding site" evidence="1">
    <location>
        <position position="162"/>
    </location>
    <ligand>
        <name>ATP</name>
        <dbReference type="ChEBI" id="CHEBI:30616"/>
    </ligand>
</feature>
<feature type="binding site" evidence="1">
    <location>
        <begin position="167"/>
        <end position="172"/>
    </location>
    <ligand>
        <name>ATP</name>
        <dbReference type="ChEBI" id="CHEBI:30616"/>
    </ligand>
</feature>
<feature type="binding site" evidence="1">
    <location>
        <begin position="202"/>
        <end position="205"/>
    </location>
    <ligand>
        <name>ATP</name>
        <dbReference type="ChEBI" id="CHEBI:30616"/>
    </ligand>
</feature>
<feature type="binding site" evidence="1">
    <location>
        <position position="210"/>
    </location>
    <ligand>
        <name>ATP</name>
        <dbReference type="ChEBI" id="CHEBI:30616"/>
    </ligand>
</feature>
<feature type="binding site" evidence="1">
    <location>
        <position position="279"/>
    </location>
    <ligand>
        <name>Mg(2+)</name>
        <dbReference type="ChEBI" id="CHEBI:18420"/>
    </ligand>
</feature>
<feature type="binding site" evidence="1">
    <location>
        <position position="291"/>
    </location>
    <ligand>
        <name>Mg(2+)</name>
        <dbReference type="ChEBI" id="CHEBI:18420"/>
    </ligand>
</feature>
<feature type="binding site" evidence="1">
    <location>
        <position position="298"/>
    </location>
    <ligand>
        <name>N(1)-(5-phospho-beta-D-ribosyl)glycinamide</name>
        <dbReference type="ChEBI" id="CHEBI:143788"/>
    </ligand>
</feature>
<feature type="binding site" evidence="1">
    <location>
        <position position="367"/>
    </location>
    <ligand>
        <name>N(1)-(5-phospho-beta-D-ribosyl)glycinamide</name>
        <dbReference type="ChEBI" id="CHEBI:143788"/>
    </ligand>
</feature>
<feature type="binding site" evidence="1">
    <location>
        <begin position="374"/>
        <end position="375"/>
    </location>
    <ligand>
        <name>N(1)-(5-phospho-beta-D-ribosyl)glycinamide</name>
        <dbReference type="ChEBI" id="CHEBI:143788"/>
    </ligand>
</feature>
<dbReference type="EC" id="6.3.1.21" evidence="1"/>
<dbReference type="EMBL" id="CP000884">
    <property type="protein sequence ID" value="ABX37881.1"/>
    <property type="molecule type" value="Genomic_DNA"/>
</dbReference>
<dbReference type="RefSeq" id="WP_012207051.1">
    <property type="nucleotide sequence ID" value="NC_010002.1"/>
</dbReference>
<dbReference type="SMR" id="A9BNI6"/>
<dbReference type="STRING" id="398578.Daci_5252"/>
<dbReference type="GeneID" id="24116000"/>
<dbReference type="KEGG" id="dac:Daci_5252"/>
<dbReference type="eggNOG" id="COG0027">
    <property type="taxonomic scope" value="Bacteria"/>
</dbReference>
<dbReference type="HOGENOM" id="CLU_011534_1_3_4"/>
<dbReference type="UniPathway" id="UPA00074">
    <property type="reaction ID" value="UER00127"/>
</dbReference>
<dbReference type="Proteomes" id="UP000000784">
    <property type="component" value="Chromosome"/>
</dbReference>
<dbReference type="GO" id="GO:0005829">
    <property type="term" value="C:cytosol"/>
    <property type="evidence" value="ECO:0007669"/>
    <property type="project" value="TreeGrafter"/>
</dbReference>
<dbReference type="GO" id="GO:0005524">
    <property type="term" value="F:ATP binding"/>
    <property type="evidence" value="ECO:0007669"/>
    <property type="project" value="UniProtKB-UniRule"/>
</dbReference>
<dbReference type="GO" id="GO:0000287">
    <property type="term" value="F:magnesium ion binding"/>
    <property type="evidence" value="ECO:0007669"/>
    <property type="project" value="InterPro"/>
</dbReference>
<dbReference type="GO" id="GO:0043815">
    <property type="term" value="F:phosphoribosylglycinamide formyltransferase 2 activity"/>
    <property type="evidence" value="ECO:0007669"/>
    <property type="project" value="UniProtKB-UniRule"/>
</dbReference>
<dbReference type="GO" id="GO:0004644">
    <property type="term" value="F:phosphoribosylglycinamide formyltransferase activity"/>
    <property type="evidence" value="ECO:0007669"/>
    <property type="project" value="InterPro"/>
</dbReference>
<dbReference type="GO" id="GO:0006189">
    <property type="term" value="P:'de novo' IMP biosynthetic process"/>
    <property type="evidence" value="ECO:0007669"/>
    <property type="project" value="UniProtKB-UniRule"/>
</dbReference>
<dbReference type="Gene3D" id="3.40.50.20">
    <property type="match status" value="1"/>
</dbReference>
<dbReference type="Gene3D" id="3.30.1490.20">
    <property type="entry name" value="ATP-grasp fold, A domain"/>
    <property type="match status" value="1"/>
</dbReference>
<dbReference type="Gene3D" id="3.30.470.20">
    <property type="entry name" value="ATP-grasp fold, B domain"/>
    <property type="match status" value="1"/>
</dbReference>
<dbReference type="HAMAP" id="MF_01643">
    <property type="entry name" value="PurT"/>
    <property type="match status" value="1"/>
</dbReference>
<dbReference type="InterPro" id="IPR011761">
    <property type="entry name" value="ATP-grasp"/>
</dbReference>
<dbReference type="InterPro" id="IPR003135">
    <property type="entry name" value="ATP-grasp_carboxylate-amine"/>
</dbReference>
<dbReference type="InterPro" id="IPR013815">
    <property type="entry name" value="ATP_grasp_subdomain_1"/>
</dbReference>
<dbReference type="InterPro" id="IPR016185">
    <property type="entry name" value="PreATP-grasp_dom_sf"/>
</dbReference>
<dbReference type="InterPro" id="IPR005862">
    <property type="entry name" value="PurT"/>
</dbReference>
<dbReference type="InterPro" id="IPR054350">
    <property type="entry name" value="PurT/PurK_preATP-grasp"/>
</dbReference>
<dbReference type="InterPro" id="IPR048740">
    <property type="entry name" value="PurT_C"/>
</dbReference>
<dbReference type="InterPro" id="IPR011054">
    <property type="entry name" value="Rudment_hybrid_motif"/>
</dbReference>
<dbReference type="NCBIfam" id="NF006766">
    <property type="entry name" value="PRK09288.1"/>
    <property type="match status" value="1"/>
</dbReference>
<dbReference type="NCBIfam" id="TIGR01142">
    <property type="entry name" value="purT"/>
    <property type="match status" value="1"/>
</dbReference>
<dbReference type="PANTHER" id="PTHR43055">
    <property type="entry name" value="FORMATE-DEPENDENT PHOSPHORIBOSYLGLYCINAMIDE FORMYLTRANSFERASE"/>
    <property type="match status" value="1"/>
</dbReference>
<dbReference type="PANTHER" id="PTHR43055:SF1">
    <property type="entry name" value="FORMATE-DEPENDENT PHOSPHORIBOSYLGLYCINAMIDE FORMYLTRANSFERASE"/>
    <property type="match status" value="1"/>
</dbReference>
<dbReference type="Pfam" id="PF02222">
    <property type="entry name" value="ATP-grasp"/>
    <property type="match status" value="1"/>
</dbReference>
<dbReference type="Pfam" id="PF21244">
    <property type="entry name" value="PurT_C"/>
    <property type="match status" value="1"/>
</dbReference>
<dbReference type="Pfam" id="PF22660">
    <property type="entry name" value="RS_preATP-grasp-like"/>
    <property type="match status" value="1"/>
</dbReference>
<dbReference type="SUPFAM" id="SSF56059">
    <property type="entry name" value="Glutathione synthetase ATP-binding domain-like"/>
    <property type="match status" value="1"/>
</dbReference>
<dbReference type="SUPFAM" id="SSF52440">
    <property type="entry name" value="PreATP-grasp domain"/>
    <property type="match status" value="1"/>
</dbReference>
<dbReference type="SUPFAM" id="SSF51246">
    <property type="entry name" value="Rudiment single hybrid motif"/>
    <property type="match status" value="1"/>
</dbReference>
<dbReference type="PROSITE" id="PS50975">
    <property type="entry name" value="ATP_GRASP"/>
    <property type="match status" value="1"/>
</dbReference>
<gene>
    <name evidence="1" type="primary">purT</name>
    <name type="ordered locus">Daci_5252</name>
</gene>
<name>PURT_DELAS</name>
<sequence length="405" mass="43411">MTTLGTPYSPHATKVMLLGSGELGKEVLIALQRLGVETIAVDRYENAPGQQVAHHARTITMSDPAQLKALIEAEKPDLVVPEIEAIATPMLEELEAAGVVTVIPTARAARLTMDREGIRRLAAETLGLATSPYRFCDSQQELQAAIDGTDGQPAIGFPCVVKPVMSSSGKGQSKLDGPDDVAKAWDYAMAGGRVSHGRVIVEGFIDFDYEITQLTVRAKGADGQVQTHFCDPIGHIQQSGDYVESWQPHPMHPAALQKSRDIAKAVTDDLGGLGLFGVELFVKGEQVWFSEVSPRPHDTGLVTLATQWQSEFELHARAILGLPVDASLRNPGASAVIYGGQDAEGLVFDGVDEALAVPGTDLRLFGKPESFVKRRMGVALARAQDVEQARTNAKLAAGKVKPRKP</sequence>
<protein>
    <recommendedName>
        <fullName evidence="1">Formate-dependent phosphoribosylglycinamide formyltransferase</fullName>
        <ecNumber evidence="1">6.3.1.21</ecNumber>
    </recommendedName>
    <alternativeName>
        <fullName evidence="1">5'-phosphoribosylglycinamide transformylase 2</fullName>
    </alternativeName>
    <alternativeName>
        <fullName evidence="1">Formate-dependent GAR transformylase</fullName>
    </alternativeName>
    <alternativeName>
        <fullName evidence="1">GAR transformylase 2</fullName>
        <shortName evidence="1">GART 2</shortName>
    </alternativeName>
    <alternativeName>
        <fullName evidence="1">Non-folate glycinamide ribonucleotide transformylase</fullName>
    </alternativeName>
    <alternativeName>
        <fullName evidence="1">Phosphoribosylglycinamide formyltransferase 2</fullName>
    </alternativeName>
</protein>
<evidence type="ECO:0000255" key="1">
    <source>
        <dbReference type="HAMAP-Rule" id="MF_01643"/>
    </source>
</evidence>